<organism>
    <name type="scientific">Homo sapiens</name>
    <name type="common">Human</name>
    <dbReference type="NCBI Taxonomy" id="9606"/>
    <lineage>
        <taxon>Eukaryota</taxon>
        <taxon>Metazoa</taxon>
        <taxon>Chordata</taxon>
        <taxon>Craniata</taxon>
        <taxon>Vertebrata</taxon>
        <taxon>Euteleostomi</taxon>
        <taxon>Mammalia</taxon>
        <taxon>Eutheria</taxon>
        <taxon>Euarchontoglires</taxon>
        <taxon>Primates</taxon>
        <taxon>Haplorrhini</taxon>
        <taxon>Catarrhini</taxon>
        <taxon>Hominidae</taxon>
        <taxon>Homo</taxon>
    </lineage>
</organism>
<protein>
    <recommendedName>
        <fullName>Protein FAM110B</fullName>
    </recommendedName>
</protein>
<comment type="function">
    <text>May be involved in tumor progression.</text>
</comment>
<comment type="interaction">
    <interactant intactId="EBI-2558383">
        <id>Q8TC76</id>
    </interactant>
    <interactant intactId="EBI-7116203">
        <id>O75031</id>
        <label>HSF2BP</label>
    </interactant>
    <organismsDiffer>false</organismsDiffer>
    <experiments>3</experiments>
</comment>
<comment type="interaction">
    <interactant intactId="EBI-2558383">
        <id>Q8TC76</id>
    </interactant>
    <interactant intactId="EBI-18582591">
        <id>Q99687-3</id>
        <label>MEIS3</label>
    </interactant>
    <organismsDiffer>false</organismsDiffer>
    <experiments>3</experiments>
</comment>
<comment type="interaction">
    <interactant intactId="EBI-2558383">
        <id>Q8TC76</id>
    </interactant>
    <interactant intactId="EBI-1373569">
        <id>P55347</id>
        <label>PKNOX1</label>
    </interactant>
    <organismsDiffer>false</organismsDiffer>
    <experiments>3</experiments>
</comment>
<comment type="interaction">
    <interactant intactId="EBI-2558383">
        <id>Q8TC76</id>
    </interactant>
    <interactant intactId="EBI-2692890">
        <id>Q96KN3</id>
        <label>PKNOX2</label>
    </interactant>
    <organismsDiffer>false</organismsDiffer>
    <experiments>5</experiments>
</comment>
<comment type="interaction">
    <interactant intactId="EBI-2558383">
        <id>Q8TC76</id>
    </interactant>
    <interactant intactId="EBI-356498">
        <id>P62258</id>
        <label>YWHAE</label>
    </interactant>
    <organismsDiffer>false</organismsDiffer>
    <experiments>3</experiments>
</comment>
<comment type="subcellular location">
    <subcellularLocation>
        <location evidence="4">Cytoplasm</location>
    </subcellularLocation>
    <subcellularLocation>
        <location evidence="4">Cytoplasm</location>
        <location evidence="4">Cytoskeleton</location>
        <location evidence="4">Microtubule organizing center</location>
        <location evidence="4">Centrosome</location>
    </subcellularLocation>
</comment>
<comment type="tissue specificity">
    <text evidence="4">Detected in thyroid, spleen and testis, and at lower levels in stomach, spinal cord, lymph node, trachea, adrenal gland, prostate, ovary and intestine.</text>
</comment>
<comment type="similarity">
    <text evidence="5">Belongs to the FAM110 family.</text>
</comment>
<comment type="sequence caution" evidence="5">
    <conflict type="erroneous initiation">
        <sequence resource="EMBL-CDS" id="AAB50224"/>
    </conflict>
</comment>
<sequence>MPTETLQTGSMVKPVSPAGTFTSAVPLRILNKGPDYFRRQAEPNPKRLSAVERLEADKAKYVKSQEVINAKQEPVKPAVLAKPPVCPAAKRALGSPTLKVFGNHAKTESGVQRENLKLEILKNIINSSEGSSSGSGHKHSSRNWPPHRSEATDLHRHSFAESLKVYPTQGRRSPQEGGSHVGRRLLEQSAESFLHVSHSSSDIRKVTSVKPLKAIPCSSSAPPLPPKPKIAAIASMKSPEADPVEPACGVSRRPSLQRSKSDLSDRYFRVDADVERFFNYCGLDPEELENLGMENFARANSDIISLNFRSASMISSDCEQSQDSNSDLRNDDSANDRVPYGISAIERNARIIKWLYSIKQARESQKVSHV</sequence>
<dbReference type="EMBL" id="AY937246">
    <property type="protein sequence ID" value="AAX28928.1"/>
    <property type="molecule type" value="mRNA"/>
</dbReference>
<dbReference type="EMBL" id="DQ431182">
    <property type="protein sequence ID" value="ABD92774.1"/>
    <property type="molecule type" value="mRNA"/>
</dbReference>
<dbReference type="EMBL" id="U79298">
    <property type="protein sequence ID" value="AAB50224.1"/>
    <property type="status" value="ALT_INIT"/>
    <property type="molecule type" value="mRNA"/>
</dbReference>
<dbReference type="EMBL" id="BC024294">
    <property type="protein sequence ID" value="AAH24294.1"/>
    <property type="molecule type" value="mRNA"/>
</dbReference>
<dbReference type="CCDS" id="CCDS6170.1"/>
<dbReference type="RefSeq" id="NP_001364918.1">
    <property type="nucleotide sequence ID" value="NM_001377989.1"/>
</dbReference>
<dbReference type="RefSeq" id="NP_001364926.1">
    <property type="nucleotide sequence ID" value="NM_001377997.1"/>
</dbReference>
<dbReference type="RefSeq" id="NP_001364927.1">
    <property type="nucleotide sequence ID" value="NM_001377998.1"/>
</dbReference>
<dbReference type="RefSeq" id="NP_671722.1">
    <property type="nucleotide sequence ID" value="NM_147189.4"/>
</dbReference>
<dbReference type="RefSeq" id="XP_005251381.1">
    <property type="nucleotide sequence ID" value="XM_005251324.2"/>
</dbReference>
<dbReference type="RefSeq" id="XP_005251382.1">
    <property type="nucleotide sequence ID" value="XM_005251325.3"/>
</dbReference>
<dbReference type="RefSeq" id="XP_005251383.1">
    <property type="nucleotide sequence ID" value="XM_005251326.2"/>
</dbReference>
<dbReference type="RefSeq" id="XP_016869437.1">
    <property type="nucleotide sequence ID" value="XM_017013948.2"/>
</dbReference>
<dbReference type="RefSeq" id="XP_047278356.1">
    <property type="nucleotide sequence ID" value="XM_047422400.1"/>
</dbReference>
<dbReference type="RefSeq" id="XP_054217437.1">
    <property type="nucleotide sequence ID" value="XM_054361462.1"/>
</dbReference>
<dbReference type="RefSeq" id="XP_054217438.1">
    <property type="nucleotide sequence ID" value="XM_054361463.1"/>
</dbReference>
<dbReference type="BioGRID" id="124703">
    <property type="interactions" value="69"/>
</dbReference>
<dbReference type="FunCoup" id="Q8TC76">
    <property type="interactions" value="1358"/>
</dbReference>
<dbReference type="IntAct" id="Q8TC76">
    <property type="interactions" value="14"/>
</dbReference>
<dbReference type="MINT" id="Q8TC76"/>
<dbReference type="STRING" id="9606.ENSP00000355204"/>
<dbReference type="GlyGen" id="Q8TC76">
    <property type="glycosylation" value="1 site"/>
</dbReference>
<dbReference type="iPTMnet" id="Q8TC76"/>
<dbReference type="PhosphoSitePlus" id="Q8TC76"/>
<dbReference type="BioMuta" id="FAM110B"/>
<dbReference type="DMDM" id="74730569"/>
<dbReference type="jPOST" id="Q8TC76"/>
<dbReference type="MassIVE" id="Q8TC76"/>
<dbReference type="PaxDb" id="9606-ENSP00000355204"/>
<dbReference type="PeptideAtlas" id="Q8TC76"/>
<dbReference type="ProteomicsDB" id="74097"/>
<dbReference type="Pumba" id="Q8TC76"/>
<dbReference type="Antibodypedia" id="2031">
    <property type="antibodies" value="88 antibodies from 13 providers"/>
</dbReference>
<dbReference type="DNASU" id="90362"/>
<dbReference type="Ensembl" id="ENST00000361488.7">
    <property type="protein sequence ID" value="ENSP00000355204.3"/>
    <property type="gene ID" value="ENSG00000169122.12"/>
</dbReference>
<dbReference type="Ensembl" id="ENST00000519262.6">
    <property type="protein sequence ID" value="ENSP00000509301.1"/>
    <property type="gene ID" value="ENSG00000169122.12"/>
</dbReference>
<dbReference type="GeneID" id="90362"/>
<dbReference type="KEGG" id="hsa:90362"/>
<dbReference type="MANE-Select" id="ENST00000519262.6">
    <property type="protein sequence ID" value="ENSP00000509301.1"/>
    <property type="RefSeq nucleotide sequence ID" value="NM_001377989.1"/>
    <property type="RefSeq protein sequence ID" value="NP_001364918.1"/>
</dbReference>
<dbReference type="UCSC" id="uc003xtj.2">
    <property type="organism name" value="human"/>
</dbReference>
<dbReference type="AGR" id="HGNC:28587"/>
<dbReference type="CTD" id="90362"/>
<dbReference type="DisGeNET" id="90362"/>
<dbReference type="GeneCards" id="FAM110B"/>
<dbReference type="HGNC" id="HGNC:28587">
    <property type="gene designation" value="FAM110B"/>
</dbReference>
<dbReference type="HPA" id="ENSG00000169122">
    <property type="expression patterns" value="Low tissue specificity"/>
</dbReference>
<dbReference type="MIM" id="611394">
    <property type="type" value="gene"/>
</dbReference>
<dbReference type="neXtProt" id="NX_Q8TC76"/>
<dbReference type="OpenTargets" id="ENSG00000169122"/>
<dbReference type="PharmGKB" id="PA162385659"/>
<dbReference type="VEuPathDB" id="HostDB:ENSG00000169122"/>
<dbReference type="eggNOG" id="ENOG502R37V">
    <property type="taxonomic scope" value="Eukaryota"/>
</dbReference>
<dbReference type="GeneTree" id="ENSGT00950000183056"/>
<dbReference type="HOGENOM" id="CLU_050540_0_0_1"/>
<dbReference type="InParanoid" id="Q8TC76"/>
<dbReference type="OMA" id="IASMKSP"/>
<dbReference type="OrthoDB" id="10028183at2759"/>
<dbReference type="PAN-GO" id="Q8TC76">
    <property type="GO annotations" value="0 GO annotations based on evolutionary models"/>
</dbReference>
<dbReference type="PhylomeDB" id="Q8TC76"/>
<dbReference type="TreeFam" id="TF330964"/>
<dbReference type="PathwayCommons" id="Q8TC76"/>
<dbReference type="SignaLink" id="Q8TC76"/>
<dbReference type="BioGRID-ORCS" id="90362">
    <property type="hits" value="18 hits in 1154 CRISPR screens"/>
</dbReference>
<dbReference type="CD-CODE" id="8C2F96ED">
    <property type="entry name" value="Centrosome"/>
</dbReference>
<dbReference type="ChiTaRS" id="FAM110B">
    <property type="organism name" value="human"/>
</dbReference>
<dbReference type="GenomeRNAi" id="90362"/>
<dbReference type="Pharos" id="Q8TC76">
    <property type="development level" value="Tbio"/>
</dbReference>
<dbReference type="PRO" id="PR:Q8TC76"/>
<dbReference type="Proteomes" id="UP000005640">
    <property type="component" value="Chromosome 8"/>
</dbReference>
<dbReference type="RNAct" id="Q8TC76">
    <property type="molecule type" value="protein"/>
</dbReference>
<dbReference type="Bgee" id="ENSG00000169122">
    <property type="expression patterns" value="Expressed in cortical plate and 166 other cell types or tissues"/>
</dbReference>
<dbReference type="ExpressionAtlas" id="Q8TC76">
    <property type="expression patterns" value="baseline and differential"/>
</dbReference>
<dbReference type="GO" id="GO:0005813">
    <property type="term" value="C:centrosome"/>
    <property type="evidence" value="ECO:0007669"/>
    <property type="project" value="UniProtKB-SubCell"/>
</dbReference>
<dbReference type="GO" id="GO:0005829">
    <property type="term" value="C:cytosol"/>
    <property type="evidence" value="ECO:0000314"/>
    <property type="project" value="HPA"/>
</dbReference>
<dbReference type="GO" id="GO:0005739">
    <property type="term" value="C:mitochondrion"/>
    <property type="evidence" value="ECO:0000314"/>
    <property type="project" value="HPA"/>
</dbReference>
<dbReference type="InterPro" id="IPR025740">
    <property type="entry name" value="FAM110"/>
</dbReference>
<dbReference type="InterPro" id="IPR025741">
    <property type="entry name" value="FAM110_C"/>
</dbReference>
<dbReference type="InterPro" id="IPR025739">
    <property type="entry name" value="FAM110_N"/>
</dbReference>
<dbReference type="PANTHER" id="PTHR14758">
    <property type="entry name" value="AGAP005440-PA"/>
    <property type="match status" value="1"/>
</dbReference>
<dbReference type="PANTHER" id="PTHR14758:SF2">
    <property type="entry name" value="PROTEIN FAM110B"/>
    <property type="match status" value="1"/>
</dbReference>
<dbReference type="Pfam" id="PF14160">
    <property type="entry name" value="FAM110_C"/>
    <property type="match status" value="1"/>
</dbReference>
<dbReference type="Pfam" id="PF14161">
    <property type="entry name" value="FAM110_N"/>
    <property type="match status" value="1"/>
</dbReference>
<proteinExistence type="evidence at protein level"/>
<evidence type="ECO:0000250" key="1">
    <source>
        <dbReference type="UniProtKB" id="Q8C739"/>
    </source>
</evidence>
<evidence type="ECO:0000256" key="2">
    <source>
        <dbReference type="SAM" id="MobiDB-lite"/>
    </source>
</evidence>
<evidence type="ECO:0000269" key="3">
    <source>
    </source>
</evidence>
<evidence type="ECO:0000269" key="4">
    <source>
    </source>
</evidence>
<evidence type="ECO:0000305" key="5"/>
<evidence type="ECO:0007744" key="6">
    <source>
    </source>
</evidence>
<evidence type="ECO:0007744" key="7">
    <source>
    </source>
</evidence>
<evidence type="ECO:0007744" key="8">
    <source>
    </source>
</evidence>
<reference key="1">
    <citation type="journal article" date="2005" name="Shi Jie Hua Ren Xiao Hua Za Zhi">
        <title>Molecular cloning and bioinformatic analysis of a novel tumor-associated gene MGC39325.</title>
        <authorList>
            <person name="Li X.-N."/>
            <person name="Li Y.-L."/>
            <person name="Liu G.-B."/>
            <person name="Ding Y.-Q."/>
        </authorList>
    </citation>
    <scope>NUCLEOTIDE SEQUENCE [MRNA]</scope>
    <source>
        <tissue>Colon carcinoma</tissue>
    </source>
</reference>
<reference key="2">
    <citation type="journal article" date="2007" name="Genomics">
        <title>Characterization of the FAM110 gene family.</title>
        <authorList>
            <person name="Hauge H."/>
            <person name="Patzke S."/>
            <person name="Aasheim H.-C."/>
        </authorList>
    </citation>
    <scope>NUCLEOTIDE SEQUENCE [MRNA]</scope>
    <scope>SUBCELLULAR LOCATION</scope>
    <scope>TISSUE SPECIFICITY</scope>
</reference>
<reference key="3">
    <citation type="journal article" date="1997" name="Genome Res.">
        <title>Large-scale concatenation cDNA sequencing.</title>
        <authorList>
            <person name="Yu W."/>
            <person name="Andersson B."/>
            <person name="Worley K.C."/>
            <person name="Muzny D.M."/>
            <person name="Ding Y."/>
            <person name="Liu W."/>
            <person name="Ricafrente J.Y."/>
            <person name="Wentland M.A."/>
            <person name="Lennon G."/>
            <person name="Gibbs R.A."/>
        </authorList>
    </citation>
    <scope>NUCLEOTIDE SEQUENCE [LARGE SCALE MRNA]</scope>
    <source>
        <tissue>Brain</tissue>
    </source>
</reference>
<reference key="4">
    <citation type="journal article" date="2004" name="Genome Res.">
        <title>The status, quality, and expansion of the NIH full-length cDNA project: the Mammalian Gene Collection (MGC).</title>
        <authorList>
            <consortium name="The MGC Project Team"/>
        </authorList>
    </citation>
    <scope>NUCLEOTIDE SEQUENCE [LARGE SCALE MRNA]</scope>
    <source>
        <tissue>Spleen</tissue>
    </source>
</reference>
<reference key="5">
    <citation type="journal article" date="2010" name="Sci. Signal.">
        <title>Quantitative phosphoproteomics reveals widespread full phosphorylation site occupancy during mitosis.</title>
        <authorList>
            <person name="Olsen J.V."/>
            <person name="Vermeulen M."/>
            <person name="Santamaria A."/>
            <person name="Kumar C."/>
            <person name="Miller M.L."/>
            <person name="Jensen L.J."/>
            <person name="Gnad F."/>
            <person name="Cox J."/>
            <person name="Jensen T.S."/>
            <person name="Nigg E.A."/>
            <person name="Brunak S."/>
            <person name="Mann M."/>
        </authorList>
    </citation>
    <scope>PHOSPHORYLATION [LARGE SCALE ANALYSIS] AT SER-301</scope>
    <scope>IDENTIFICATION BY MASS SPECTROMETRY [LARGE SCALE ANALYSIS]</scope>
    <source>
        <tissue>Cervix carcinoma</tissue>
    </source>
</reference>
<reference key="6">
    <citation type="journal article" date="2011" name="Sci. Signal.">
        <title>System-wide temporal characterization of the proteome and phosphoproteome of human embryonic stem cell differentiation.</title>
        <authorList>
            <person name="Rigbolt K.T."/>
            <person name="Prokhorova T.A."/>
            <person name="Akimov V."/>
            <person name="Henningsen J."/>
            <person name="Johansen P.T."/>
            <person name="Kratchmarova I."/>
            <person name="Kassem M."/>
            <person name="Mann M."/>
            <person name="Olsen J.V."/>
            <person name="Blagoev B."/>
        </authorList>
    </citation>
    <scope>PHOSPHORYLATION [LARGE SCALE ANALYSIS] AT SER-301</scope>
    <scope>IDENTIFICATION BY MASS SPECTROMETRY [LARGE SCALE ANALYSIS]</scope>
</reference>
<reference key="7">
    <citation type="journal article" date="2013" name="J. Proteome Res.">
        <title>Toward a comprehensive characterization of a human cancer cell phosphoproteome.</title>
        <authorList>
            <person name="Zhou H."/>
            <person name="Di Palma S."/>
            <person name="Preisinger C."/>
            <person name="Peng M."/>
            <person name="Polat A.N."/>
            <person name="Heck A.J."/>
            <person name="Mohammed S."/>
        </authorList>
    </citation>
    <scope>PHOSPHORYLATION [LARGE SCALE ANALYSIS] AT SER-301</scope>
    <scope>IDENTIFICATION BY MASS SPECTROMETRY [LARGE SCALE ANALYSIS]</scope>
    <source>
        <tissue>Erythroleukemia</tissue>
    </source>
</reference>
<reference key="8">
    <citation type="journal article" date="2014" name="J. Proteomics">
        <title>An enzyme assisted RP-RPLC approach for in-depth analysis of human liver phosphoproteome.</title>
        <authorList>
            <person name="Bian Y."/>
            <person name="Song C."/>
            <person name="Cheng K."/>
            <person name="Dong M."/>
            <person name="Wang F."/>
            <person name="Huang J."/>
            <person name="Sun D."/>
            <person name="Wang L."/>
            <person name="Ye M."/>
            <person name="Zou H."/>
        </authorList>
    </citation>
    <scope>IDENTIFICATION BY MASS SPECTROMETRY [LARGE SCALE ANALYSIS]</scope>
    <source>
        <tissue>Liver</tissue>
    </source>
</reference>
<reference key="9">
    <citation type="journal article" date="2006" name="Science">
        <title>The consensus coding sequences of human breast and colorectal cancers.</title>
        <authorList>
            <person name="Sjoeblom T."/>
            <person name="Jones S."/>
            <person name="Wood L.D."/>
            <person name="Parsons D.W."/>
            <person name="Lin J."/>
            <person name="Barber T.D."/>
            <person name="Mandelker D."/>
            <person name="Leary R.J."/>
            <person name="Ptak J."/>
            <person name="Silliman N."/>
            <person name="Szabo S."/>
            <person name="Buckhaults P."/>
            <person name="Farrell C."/>
            <person name="Meeh P."/>
            <person name="Markowitz S.D."/>
            <person name="Willis J."/>
            <person name="Dawson D."/>
            <person name="Willson J.K.V."/>
            <person name="Gazdar A.F."/>
            <person name="Hartigan J."/>
            <person name="Wu L."/>
            <person name="Liu C."/>
            <person name="Parmigiani G."/>
            <person name="Park B.H."/>
            <person name="Bachman K.E."/>
            <person name="Papadopoulos N."/>
            <person name="Vogelstein B."/>
            <person name="Kinzler K.W."/>
            <person name="Velculescu V.E."/>
        </authorList>
    </citation>
    <scope>VARIANT [LARGE SCALE ANALYSIS] SER-214</scope>
</reference>
<accession>Q8TC76</accession>
<accession>Q5BM08</accession>
<accession>Q9Y4K2</accession>
<name>F110B_HUMAN</name>
<gene>
    <name type="primary">FAM110B</name>
    <name type="synonym">C8orf72</name>
</gene>
<feature type="chain" id="PRO_0000285651" description="Protein FAM110B">
    <location>
        <begin position="1"/>
        <end position="370"/>
    </location>
</feature>
<feature type="region of interest" description="Disordered" evidence="2">
    <location>
        <begin position="127"/>
        <end position="151"/>
    </location>
</feature>
<feature type="region of interest" description="Disordered" evidence="2">
    <location>
        <begin position="237"/>
        <end position="256"/>
    </location>
</feature>
<feature type="region of interest" description="Disordered" evidence="2">
    <location>
        <begin position="317"/>
        <end position="337"/>
    </location>
</feature>
<feature type="compositionally biased region" description="Basic and acidic residues" evidence="2">
    <location>
        <begin position="326"/>
        <end position="335"/>
    </location>
</feature>
<feature type="modified residue" description="Phosphoserine" evidence="1">
    <location>
        <position position="238"/>
    </location>
</feature>
<feature type="modified residue" description="Phosphoserine" evidence="6 7 8">
    <location>
        <position position="301"/>
    </location>
</feature>
<feature type="sequence variant" id="VAR_036319" description="In a colorectal cancer sample; somatic mutation; dbSNP:rs150740446." evidence="3">
    <original>A</original>
    <variation>S</variation>
    <location>
        <position position="214"/>
    </location>
</feature>
<feature type="sequence conflict" description="In Ref. 1; AAX28928." evidence="5" ref="1">
    <original>A</original>
    <variation>T</variation>
    <location>
        <position position="41"/>
    </location>
</feature>
<feature type="sequence conflict" description="In Ref. 1; AAX28928." evidence="5" ref="1">
    <original>F</original>
    <variation>Y</variation>
    <location>
        <position position="296"/>
    </location>
</feature>
<feature type="sequence conflict" description="In Ref. 1; AAX28928." evidence="5" ref="1">
    <original>I</original>
    <variation>N</variation>
    <location>
        <position position="345"/>
    </location>
</feature>
<keyword id="KW-0963">Cytoplasm</keyword>
<keyword id="KW-0206">Cytoskeleton</keyword>
<keyword id="KW-0597">Phosphoprotein</keyword>
<keyword id="KW-1267">Proteomics identification</keyword>
<keyword id="KW-1185">Reference proteome</keyword>